<comment type="function">
    <text evidence="5">Required for the maintenance of pluripotency and self-renewal of embryonic stem cells. Transcriptional activator that binds the DNA consensus sequence 5'-ATGCAAAT-3'.</text>
</comment>
<comment type="subcellular location">
    <subcellularLocation>
        <location evidence="6">Nucleus</location>
    </subcellularLocation>
</comment>
<comment type="developmental stage">
    <text evidence="5 6">Widely expressed during embryonic development (at protein level). In pre-primitive streak stage embryos, expressed in the epiblast and in a salt-and-pepper fashion in the forming hypoblast (stages XI and XIII) (at protein level). As the primitive streak starts to form, strongly expressed in the epiblast of the streak itself (stage XIV) and in the mesoderm emerging from it, whereas expression in the lower layer tends to decrease (stages 2 through 4+). Expression in the area opaca is lost by stage 3+. At later stages, continues to be expressed in the mesoderm, but not detected in the endoderm (stages 5 through 8). At stage 5, expressed in all cells of the germinal crescent. At stage 8 and subsequently, strongly expressed in the neural plate and neural tube with particularly strong expression in the anterior hindbrain/posterior midbrain. At stage 9 and subsequently, still expressed in neural tissue and in primordial germ cells (at protein level). At stage 33, still expressed in germ cells. At stages 42-43, expressed in male and female gonads, as well as in spleen and brain, but at much lower levels than in proliferating embryonic stem cells.</text>
</comment>
<comment type="induction">
    <text evidence="5">Strongly down-regulated during embryonic stem cell differentiation induced either by retinoic acid treatment, or by cell adhesion prevention leading to embryoid body formation.</text>
</comment>
<comment type="similarity">
    <text evidence="3">Belongs to the POU transcription factor family.</text>
</comment>
<comment type="sequence caution" evidence="7">
    <conflict type="erroneous gene model prediction">
        <sequence resource="EMBL-CDS" id="ABK27428"/>
    </conflict>
</comment>
<dbReference type="EMBL" id="AADN03007288">
    <property type="status" value="NOT_ANNOTATED_CDS"/>
    <property type="molecule type" value="Genomic_DNA"/>
</dbReference>
<dbReference type="EMBL" id="DQ867024">
    <property type="protein sequence ID" value="ABK27428.1"/>
    <property type="status" value="ALT_SEQ"/>
    <property type="molecule type" value="Genomic_DNA"/>
</dbReference>
<dbReference type="EMBL" id="LC016616">
    <property type="protein sequence ID" value="BAR64207.1"/>
    <property type="molecule type" value="Genomic_DNA"/>
</dbReference>
<dbReference type="EMBL" id="LC016620">
    <property type="protein sequence ID" value="BAR64208.1"/>
    <property type="molecule type" value="mRNA"/>
</dbReference>
<dbReference type="EMBL" id="BR001258">
    <property type="protein sequence ID" value="FAA01189.1"/>
    <property type="molecule type" value="mRNA"/>
</dbReference>
<dbReference type="RefSeq" id="NP_001103648.1">
    <property type="nucleotide sequence ID" value="NM_001110178.1"/>
</dbReference>
<dbReference type="RefSeq" id="NP_001296301.1">
    <property type="nucleotide sequence ID" value="NM_001309372.1"/>
</dbReference>
<dbReference type="SMR" id="A7Y7W2"/>
<dbReference type="FunCoup" id="A7Y7W2">
    <property type="interactions" value="49"/>
</dbReference>
<dbReference type="STRING" id="9031.ENSGALP00000070462"/>
<dbReference type="GlyGen" id="A7Y7W2">
    <property type="glycosylation" value="1 site"/>
</dbReference>
<dbReference type="PaxDb" id="9031-ENSGALP00000041055"/>
<dbReference type="GeneID" id="427781"/>
<dbReference type="KEGG" id="gga:427781"/>
<dbReference type="CTD" id="30333"/>
<dbReference type="VEuPathDB" id="HostDB:geneid_427781"/>
<dbReference type="eggNOG" id="KOG3802">
    <property type="taxonomic scope" value="Eukaryota"/>
</dbReference>
<dbReference type="InParanoid" id="A7Y7W2"/>
<dbReference type="OrthoDB" id="6358449at2759"/>
<dbReference type="PRO" id="PR:A7Y7W2"/>
<dbReference type="Proteomes" id="UP000000539">
    <property type="component" value="Unassembled WGS sequence"/>
</dbReference>
<dbReference type="GO" id="GO:0005654">
    <property type="term" value="C:nucleoplasm"/>
    <property type="evidence" value="ECO:0000304"/>
    <property type="project" value="Reactome"/>
</dbReference>
<dbReference type="GO" id="GO:0005634">
    <property type="term" value="C:nucleus"/>
    <property type="evidence" value="ECO:0000314"/>
    <property type="project" value="AgBase"/>
</dbReference>
<dbReference type="GO" id="GO:0000981">
    <property type="term" value="F:DNA-binding transcription factor activity, RNA polymerase II-specific"/>
    <property type="evidence" value="ECO:0000318"/>
    <property type="project" value="GO_Central"/>
</dbReference>
<dbReference type="GO" id="GO:0000978">
    <property type="term" value="F:RNA polymerase II cis-regulatory region sequence-specific DNA binding"/>
    <property type="evidence" value="ECO:0000318"/>
    <property type="project" value="GO_Central"/>
</dbReference>
<dbReference type="GO" id="GO:0043565">
    <property type="term" value="F:sequence-specific DNA binding"/>
    <property type="evidence" value="ECO:0000314"/>
    <property type="project" value="UniProtKB"/>
</dbReference>
<dbReference type="GO" id="GO:1902459">
    <property type="term" value="P:positive regulation of stem cell population maintenance"/>
    <property type="evidence" value="ECO:0000315"/>
    <property type="project" value="UniProtKB"/>
</dbReference>
<dbReference type="GO" id="GO:0006357">
    <property type="term" value="P:regulation of transcription by RNA polymerase II"/>
    <property type="evidence" value="ECO:0000318"/>
    <property type="project" value="GO_Central"/>
</dbReference>
<dbReference type="CDD" id="cd00086">
    <property type="entry name" value="homeodomain"/>
    <property type="match status" value="1"/>
</dbReference>
<dbReference type="FunFam" id="1.10.10.60:FF:000326">
    <property type="entry name" value="POU domain protein"/>
    <property type="match status" value="1"/>
</dbReference>
<dbReference type="FunFam" id="1.10.260.40:FF:000022">
    <property type="entry name" value="POU domain protein"/>
    <property type="match status" value="1"/>
</dbReference>
<dbReference type="Gene3D" id="1.10.10.60">
    <property type="entry name" value="Homeodomain-like"/>
    <property type="match status" value="1"/>
</dbReference>
<dbReference type="Gene3D" id="1.10.260.40">
    <property type="entry name" value="lambda repressor-like DNA-binding domains"/>
    <property type="match status" value="1"/>
</dbReference>
<dbReference type="InterPro" id="IPR001356">
    <property type="entry name" value="HD"/>
</dbReference>
<dbReference type="InterPro" id="IPR017970">
    <property type="entry name" value="Homeobox_CS"/>
</dbReference>
<dbReference type="InterPro" id="IPR009057">
    <property type="entry name" value="Homeodomain-like_sf"/>
</dbReference>
<dbReference type="InterPro" id="IPR010982">
    <property type="entry name" value="Lambda_DNA-bd_dom_sf"/>
</dbReference>
<dbReference type="InterPro" id="IPR013847">
    <property type="entry name" value="POU"/>
</dbReference>
<dbReference type="InterPro" id="IPR000327">
    <property type="entry name" value="POU_dom"/>
</dbReference>
<dbReference type="InterPro" id="IPR050255">
    <property type="entry name" value="POU_domain_TF"/>
</dbReference>
<dbReference type="PANTHER" id="PTHR11636">
    <property type="entry name" value="POU DOMAIN"/>
    <property type="match status" value="1"/>
</dbReference>
<dbReference type="PANTHER" id="PTHR11636:SF125">
    <property type="entry name" value="POU DOMAIN, CLASS 3, TRANSCRIPTION FACTOR 3"/>
    <property type="match status" value="1"/>
</dbReference>
<dbReference type="Pfam" id="PF00046">
    <property type="entry name" value="Homeodomain"/>
    <property type="match status" value="1"/>
</dbReference>
<dbReference type="Pfam" id="PF00157">
    <property type="entry name" value="Pou"/>
    <property type="match status" value="1"/>
</dbReference>
<dbReference type="PRINTS" id="PR00028">
    <property type="entry name" value="POUDOMAIN"/>
</dbReference>
<dbReference type="SMART" id="SM00389">
    <property type="entry name" value="HOX"/>
    <property type="match status" value="1"/>
</dbReference>
<dbReference type="SMART" id="SM00352">
    <property type="entry name" value="POU"/>
    <property type="match status" value="1"/>
</dbReference>
<dbReference type="SUPFAM" id="SSF46689">
    <property type="entry name" value="Homeodomain-like"/>
    <property type="match status" value="1"/>
</dbReference>
<dbReference type="SUPFAM" id="SSF47413">
    <property type="entry name" value="lambda repressor-like DNA-binding domains"/>
    <property type="match status" value="1"/>
</dbReference>
<dbReference type="PROSITE" id="PS00027">
    <property type="entry name" value="HOMEOBOX_1"/>
    <property type="match status" value="1"/>
</dbReference>
<dbReference type="PROSITE" id="PS50071">
    <property type="entry name" value="HOMEOBOX_2"/>
    <property type="match status" value="1"/>
</dbReference>
<dbReference type="PROSITE" id="PS00035">
    <property type="entry name" value="POU_1"/>
    <property type="match status" value="1"/>
</dbReference>
<dbReference type="PROSITE" id="PS00465">
    <property type="entry name" value="POU_2"/>
    <property type="match status" value="1"/>
</dbReference>
<dbReference type="PROSITE" id="PS51179">
    <property type="entry name" value="POU_3"/>
    <property type="match status" value="1"/>
</dbReference>
<name>PO5F3_CHICK</name>
<proteinExistence type="evidence at protein level"/>
<feature type="chain" id="PRO_0000433626" description="POU domain, class 5, transcription factor 3">
    <location>
        <begin position="1"/>
        <end position="389"/>
    </location>
</feature>
<feature type="domain" description="POU-specific" evidence="2">
    <location>
        <begin position="170"/>
        <end position="244"/>
    </location>
</feature>
<feature type="DNA-binding region" description="Homeobox" evidence="1">
    <location>
        <begin position="264"/>
        <end position="323"/>
    </location>
</feature>
<feature type="region of interest" description="Disordered" evidence="4">
    <location>
        <begin position="1"/>
        <end position="88"/>
    </location>
</feature>
<feature type="region of interest" description="Disordered" evidence="4">
    <location>
        <begin position="145"/>
        <end position="177"/>
    </location>
</feature>
<feature type="compositionally biased region" description="Low complexity" evidence="4">
    <location>
        <begin position="1"/>
        <end position="18"/>
    </location>
</feature>
<feature type="compositionally biased region" description="Low complexity" evidence="4">
    <location>
        <begin position="145"/>
        <end position="165"/>
    </location>
</feature>
<feature type="compositionally biased region" description="Acidic residues" evidence="4">
    <location>
        <begin position="167"/>
        <end position="177"/>
    </location>
</feature>
<evidence type="ECO:0000255" key="1">
    <source>
        <dbReference type="PROSITE-ProRule" id="PRU00108"/>
    </source>
</evidence>
<evidence type="ECO:0000255" key="2">
    <source>
        <dbReference type="PROSITE-ProRule" id="PRU00530"/>
    </source>
</evidence>
<evidence type="ECO:0000255" key="3">
    <source>
        <dbReference type="RuleBase" id="RU361194"/>
    </source>
</evidence>
<evidence type="ECO:0000256" key="4">
    <source>
        <dbReference type="SAM" id="MobiDB-lite"/>
    </source>
</evidence>
<evidence type="ECO:0000269" key="5">
    <source>
    </source>
</evidence>
<evidence type="ECO:0000269" key="6">
    <source>
    </source>
</evidence>
<evidence type="ECO:0000305" key="7"/>
<reference key="1">
    <citation type="journal article" date="2007" name="Development">
        <title>The Oct4 homologue PouV and Nanog regulate pluripotency in chicken embryonic stem cells.</title>
        <authorList>
            <person name="Lavial F."/>
            <person name="Acloque H."/>
            <person name="Bertocchini F."/>
            <person name="MacLeod D.J."/>
            <person name="Boast S."/>
            <person name="Bachelard E."/>
            <person name="Montillet G."/>
            <person name="Thenot S."/>
            <person name="Sang H.M."/>
            <person name="Stern C.D."/>
            <person name="Samarut J."/>
            <person name="Pain B."/>
        </authorList>
    </citation>
    <scope>NUCLEOTIDE SEQUENCE [GENOMIC DNA]</scope>
    <scope>FUNCTION</scope>
    <scope>DEVELOPMENTAL STAGE</scope>
    <scope>INDUCTION</scope>
</reference>
<reference key="2">
    <citation type="journal article" date="2015" name="Dev. Growth Differ.">
        <title>Verification of chicken Nanog as an epiblast marker and identification of chicken PouV as Pou5f3 by newly raised antibodies.</title>
        <authorList>
            <person name="Nakanoh S."/>
            <person name="Fuse N."/>
            <person name="Takahashi Y."/>
            <person name="Agata K."/>
        </authorList>
    </citation>
    <scope>NUCLEOTIDE SEQUENCE [MRNA]</scope>
    <scope>NUCLEOTIDE SEQUENCE [GENOMIC DNA] OF 1-152</scope>
    <scope>SUBCELLULAR LOCATION</scope>
    <scope>DEVELOPMENTAL STAGE</scope>
</reference>
<reference key="3">
    <citation type="journal article" date="2004" name="Nature">
        <title>Sequence and comparative analysis of the chicken genome provide unique perspectives on vertebrate evolution.</title>
        <authorList>
            <person name="Hillier L.W."/>
            <person name="Miller W."/>
            <person name="Birney E."/>
            <person name="Warren W."/>
            <person name="Hardison R.C."/>
            <person name="Ponting C.P."/>
            <person name="Bork P."/>
            <person name="Burt D.W."/>
            <person name="Groenen M.A.M."/>
            <person name="Delany M.E."/>
            <person name="Dodgson J.B."/>
            <person name="Chinwalla A.T."/>
            <person name="Cliften P.F."/>
            <person name="Clifton S.W."/>
            <person name="Delehaunty K.D."/>
            <person name="Fronick C."/>
            <person name="Fulton R.S."/>
            <person name="Graves T.A."/>
            <person name="Kremitzki C."/>
            <person name="Layman D."/>
            <person name="Magrini V."/>
            <person name="McPherson J.D."/>
            <person name="Miner T.L."/>
            <person name="Minx P."/>
            <person name="Nash W.E."/>
            <person name="Nhan M.N."/>
            <person name="Nelson J.O."/>
            <person name="Oddy L.G."/>
            <person name="Pohl C.S."/>
            <person name="Randall-Maher J."/>
            <person name="Smith S.M."/>
            <person name="Wallis J.W."/>
            <person name="Yang S.-P."/>
            <person name="Romanov M.N."/>
            <person name="Rondelli C.M."/>
            <person name="Paton B."/>
            <person name="Smith J."/>
            <person name="Morrice D."/>
            <person name="Daniels L."/>
            <person name="Tempest H.G."/>
            <person name="Robertson L."/>
            <person name="Masabanda J.S."/>
            <person name="Griffin D.K."/>
            <person name="Vignal A."/>
            <person name="Fillon V."/>
            <person name="Jacobbson L."/>
            <person name="Kerje S."/>
            <person name="Andersson L."/>
            <person name="Crooijmans R.P."/>
            <person name="Aerts J."/>
            <person name="van der Poel J.J."/>
            <person name="Ellegren H."/>
            <person name="Caldwell R.B."/>
            <person name="Hubbard S.J."/>
            <person name="Grafham D.V."/>
            <person name="Kierzek A.M."/>
            <person name="McLaren S.R."/>
            <person name="Overton I.M."/>
            <person name="Arakawa H."/>
            <person name="Beattie K.J."/>
            <person name="Bezzubov Y."/>
            <person name="Boardman P.E."/>
            <person name="Bonfield J.K."/>
            <person name="Croning M.D.R."/>
            <person name="Davies R.M."/>
            <person name="Francis M.D."/>
            <person name="Humphray S.J."/>
            <person name="Scott C.E."/>
            <person name="Taylor R.G."/>
            <person name="Tickle C."/>
            <person name="Brown W.R.A."/>
            <person name="Rogers J."/>
            <person name="Buerstedde J.-M."/>
            <person name="Wilson S.A."/>
            <person name="Stubbs L."/>
            <person name="Ovcharenko I."/>
            <person name="Gordon L."/>
            <person name="Lucas S."/>
            <person name="Miller M.M."/>
            <person name="Inoko H."/>
            <person name="Shiina T."/>
            <person name="Kaufman J."/>
            <person name="Salomonsen J."/>
            <person name="Skjoedt K."/>
            <person name="Wong G.K.-S."/>
            <person name="Wang J."/>
            <person name="Liu B."/>
            <person name="Wang J."/>
            <person name="Yu J."/>
            <person name="Yang H."/>
            <person name="Nefedov M."/>
            <person name="Koriabine M."/>
            <person name="Dejong P.J."/>
            <person name="Goodstadt L."/>
            <person name="Webber C."/>
            <person name="Dickens N.J."/>
            <person name="Letunic I."/>
            <person name="Suyama M."/>
            <person name="Torrents D."/>
            <person name="von Mering C."/>
            <person name="Zdobnov E.M."/>
            <person name="Makova K."/>
            <person name="Nekrutenko A."/>
            <person name="Elnitski L."/>
            <person name="Eswara P."/>
            <person name="King D.C."/>
            <person name="Yang S.-P."/>
            <person name="Tyekucheva S."/>
            <person name="Radakrishnan A."/>
            <person name="Harris R.S."/>
            <person name="Chiaromonte F."/>
            <person name="Taylor J."/>
            <person name="He J."/>
            <person name="Rijnkels M."/>
            <person name="Griffiths-Jones S."/>
            <person name="Ureta-Vidal A."/>
            <person name="Hoffman M.M."/>
            <person name="Severin J."/>
            <person name="Searle S.M.J."/>
            <person name="Law A.S."/>
            <person name="Speed D."/>
            <person name="Waddington D."/>
            <person name="Cheng Z."/>
            <person name="Tuzun E."/>
            <person name="Eichler E."/>
            <person name="Bao Z."/>
            <person name="Flicek P."/>
            <person name="Shteynberg D.D."/>
            <person name="Brent M.R."/>
            <person name="Bye J.M."/>
            <person name="Huckle E.J."/>
            <person name="Chatterji S."/>
            <person name="Dewey C."/>
            <person name="Pachter L."/>
            <person name="Kouranov A."/>
            <person name="Mourelatos Z."/>
            <person name="Hatzigeorgiou A.G."/>
            <person name="Paterson A.H."/>
            <person name="Ivarie R."/>
            <person name="Brandstrom M."/>
            <person name="Axelsson E."/>
            <person name="Backstrom N."/>
            <person name="Berlin S."/>
            <person name="Webster M.T."/>
            <person name="Pourquie O."/>
            <person name="Reymond A."/>
            <person name="Ucla C."/>
            <person name="Antonarakis S.E."/>
            <person name="Long M."/>
            <person name="Emerson J.J."/>
            <person name="Betran E."/>
            <person name="Dupanloup I."/>
            <person name="Kaessmann H."/>
            <person name="Hinrichs A.S."/>
            <person name="Bejerano G."/>
            <person name="Furey T.S."/>
            <person name="Harte R.A."/>
            <person name="Raney B."/>
            <person name="Siepel A."/>
            <person name="Kent W.J."/>
            <person name="Haussler D."/>
            <person name="Eyras E."/>
            <person name="Castelo R."/>
            <person name="Abril J.F."/>
            <person name="Castellano S."/>
            <person name="Camara F."/>
            <person name="Parra G."/>
            <person name="Guigo R."/>
            <person name="Bourque G."/>
            <person name="Tesler G."/>
            <person name="Pevzner P.A."/>
            <person name="Smit A."/>
            <person name="Fulton L.A."/>
            <person name="Mardis E.R."/>
            <person name="Wilson R.K."/>
        </authorList>
    </citation>
    <scope>NUCLEOTIDE SEQUENCE [LARGE SCALE GENOMIC DNA]</scope>
    <source>
        <strain>Red jungle fowl</strain>
    </source>
</reference>
<protein>
    <recommendedName>
        <fullName>POU domain, class 5, transcription factor 3</fullName>
    </recommendedName>
</protein>
<keyword id="KW-0010">Activator</keyword>
<keyword id="KW-0238">DNA-binding</keyword>
<keyword id="KW-0371">Homeobox</keyword>
<keyword id="KW-0539">Nucleus</keyword>
<keyword id="KW-1185">Reference proteome</keyword>
<keyword id="KW-0804">Transcription</keyword>
<keyword id="KW-0805">Transcription regulation</keyword>
<accession>A7Y7W2</accession>
<accession>A0A0E4BYL6</accession>
<accession>A0A0E4BZG1</accession>
<accession>A0A0E9K094</accession>
<accession>R4GG91</accession>
<organism>
    <name type="scientific">Gallus gallus</name>
    <name type="common">Chicken</name>
    <dbReference type="NCBI Taxonomy" id="9031"/>
    <lineage>
        <taxon>Eukaryota</taxon>
        <taxon>Metazoa</taxon>
        <taxon>Chordata</taxon>
        <taxon>Craniata</taxon>
        <taxon>Vertebrata</taxon>
        <taxon>Euteleostomi</taxon>
        <taxon>Archelosauria</taxon>
        <taxon>Archosauria</taxon>
        <taxon>Dinosauria</taxon>
        <taxon>Saurischia</taxon>
        <taxon>Theropoda</taxon>
        <taxon>Coelurosauria</taxon>
        <taxon>Aves</taxon>
        <taxon>Neognathae</taxon>
        <taxon>Galloanserae</taxon>
        <taxon>Galliformes</taxon>
        <taxon>Phasianidae</taxon>
        <taxon>Phasianinae</taxon>
        <taxon>Gallus</taxon>
    </lineage>
</organism>
<sequence length="389" mass="41198">MFSPDGGLPAAPFGLLPDGGPPFPRGGYDGAAAQQLFFPFASEPDGARDAATARAWLPPPAGPPAKAEARPARPCRQGSPEPRAAPPATPCCGPAWAAPPWPGPAPPAATAVPGPPFPGPAAAAFPAAPGHALCPAALQPSSGGLANLGSSGSSSGAASEGGHSSDSGDEDAPTSEELEQFAKDLKHKRIMLGFTQADVGLALGTLYGKMFSQTTICRFEALQLSFKNMCKLKPLLQRWLNEAENTDNMQEMCNAEQVLAQARKRKRRTSIETNVKGTLESFFRKCVKPSPQEISQIAEDLNLDKDVVRVWFCNRRQKGKRLLLPFGNESEGVMYDMNQSLVPPGLPIPVTSQGYSLAPSPPVYMPPFHKAEMFPPPLQPGISMNNSSH</sequence>
<gene>
    <name type="primary">POU5F3</name>
    <name type="synonym">POU2</name>
    <name type="synonym">POUV</name>
</gene>